<gene>
    <name evidence="1" type="primary">rplA</name>
    <name type="ordered locus">Fnod_0846</name>
</gene>
<dbReference type="EMBL" id="CP000771">
    <property type="protein sequence ID" value="ABS60699.1"/>
    <property type="molecule type" value="Genomic_DNA"/>
</dbReference>
<dbReference type="RefSeq" id="WP_011994015.1">
    <property type="nucleotide sequence ID" value="NC_009718.1"/>
</dbReference>
<dbReference type="SMR" id="A7HLB6"/>
<dbReference type="STRING" id="381764.Fnod_0846"/>
<dbReference type="KEGG" id="fno:Fnod_0846"/>
<dbReference type="eggNOG" id="COG0081">
    <property type="taxonomic scope" value="Bacteria"/>
</dbReference>
<dbReference type="HOGENOM" id="CLU_062853_0_0_0"/>
<dbReference type="OrthoDB" id="9803740at2"/>
<dbReference type="Proteomes" id="UP000002415">
    <property type="component" value="Chromosome"/>
</dbReference>
<dbReference type="GO" id="GO:0015934">
    <property type="term" value="C:large ribosomal subunit"/>
    <property type="evidence" value="ECO:0007669"/>
    <property type="project" value="InterPro"/>
</dbReference>
<dbReference type="GO" id="GO:0019843">
    <property type="term" value="F:rRNA binding"/>
    <property type="evidence" value="ECO:0007669"/>
    <property type="project" value="UniProtKB-UniRule"/>
</dbReference>
<dbReference type="GO" id="GO:0003735">
    <property type="term" value="F:structural constituent of ribosome"/>
    <property type="evidence" value="ECO:0007669"/>
    <property type="project" value="InterPro"/>
</dbReference>
<dbReference type="GO" id="GO:0000049">
    <property type="term" value="F:tRNA binding"/>
    <property type="evidence" value="ECO:0007669"/>
    <property type="project" value="UniProtKB-KW"/>
</dbReference>
<dbReference type="GO" id="GO:0006417">
    <property type="term" value="P:regulation of translation"/>
    <property type="evidence" value="ECO:0007669"/>
    <property type="project" value="UniProtKB-KW"/>
</dbReference>
<dbReference type="GO" id="GO:0006412">
    <property type="term" value="P:translation"/>
    <property type="evidence" value="ECO:0007669"/>
    <property type="project" value="UniProtKB-UniRule"/>
</dbReference>
<dbReference type="CDD" id="cd00403">
    <property type="entry name" value="Ribosomal_L1"/>
    <property type="match status" value="1"/>
</dbReference>
<dbReference type="FunFam" id="3.40.50.790:FF:000001">
    <property type="entry name" value="50S ribosomal protein L1"/>
    <property type="match status" value="1"/>
</dbReference>
<dbReference type="Gene3D" id="3.30.190.20">
    <property type="match status" value="1"/>
</dbReference>
<dbReference type="Gene3D" id="3.40.50.790">
    <property type="match status" value="1"/>
</dbReference>
<dbReference type="HAMAP" id="MF_01318_B">
    <property type="entry name" value="Ribosomal_uL1_B"/>
    <property type="match status" value="1"/>
</dbReference>
<dbReference type="InterPro" id="IPR005878">
    <property type="entry name" value="Ribosom_uL1_bac-type"/>
</dbReference>
<dbReference type="InterPro" id="IPR002143">
    <property type="entry name" value="Ribosomal_uL1"/>
</dbReference>
<dbReference type="InterPro" id="IPR023674">
    <property type="entry name" value="Ribosomal_uL1-like"/>
</dbReference>
<dbReference type="InterPro" id="IPR028364">
    <property type="entry name" value="Ribosomal_uL1/biogenesis"/>
</dbReference>
<dbReference type="InterPro" id="IPR016095">
    <property type="entry name" value="Ribosomal_uL1_3-a/b-sand"/>
</dbReference>
<dbReference type="InterPro" id="IPR023673">
    <property type="entry name" value="Ribosomal_uL1_CS"/>
</dbReference>
<dbReference type="NCBIfam" id="TIGR01169">
    <property type="entry name" value="rplA_bact"/>
    <property type="match status" value="1"/>
</dbReference>
<dbReference type="PANTHER" id="PTHR36427">
    <property type="entry name" value="54S RIBOSOMAL PROTEIN L1, MITOCHONDRIAL"/>
    <property type="match status" value="1"/>
</dbReference>
<dbReference type="PANTHER" id="PTHR36427:SF3">
    <property type="entry name" value="LARGE RIBOSOMAL SUBUNIT PROTEIN UL1M"/>
    <property type="match status" value="1"/>
</dbReference>
<dbReference type="Pfam" id="PF00687">
    <property type="entry name" value="Ribosomal_L1"/>
    <property type="match status" value="1"/>
</dbReference>
<dbReference type="PIRSF" id="PIRSF002155">
    <property type="entry name" value="Ribosomal_L1"/>
    <property type="match status" value="1"/>
</dbReference>
<dbReference type="SUPFAM" id="SSF56808">
    <property type="entry name" value="Ribosomal protein L1"/>
    <property type="match status" value="1"/>
</dbReference>
<dbReference type="PROSITE" id="PS01199">
    <property type="entry name" value="RIBOSOMAL_L1"/>
    <property type="match status" value="1"/>
</dbReference>
<reference key="1">
    <citation type="submission" date="2007-07" db="EMBL/GenBank/DDBJ databases">
        <title>Complete sequence of Fervidobacterium nodosum Rt17-B1.</title>
        <authorList>
            <consortium name="US DOE Joint Genome Institute"/>
            <person name="Copeland A."/>
            <person name="Lucas S."/>
            <person name="Lapidus A."/>
            <person name="Barry K."/>
            <person name="Glavina del Rio T."/>
            <person name="Dalin E."/>
            <person name="Tice H."/>
            <person name="Pitluck S."/>
            <person name="Saunders E."/>
            <person name="Brettin T."/>
            <person name="Bruce D."/>
            <person name="Detter J.C."/>
            <person name="Han C."/>
            <person name="Schmutz J."/>
            <person name="Larimer F."/>
            <person name="Land M."/>
            <person name="Hauser L."/>
            <person name="Kyrpides N."/>
            <person name="Mikhailova N."/>
            <person name="Nelson K."/>
            <person name="Gogarten J.P."/>
            <person name="Noll K."/>
            <person name="Richardson P."/>
        </authorList>
    </citation>
    <scope>NUCLEOTIDE SEQUENCE [LARGE SCALE GENOMIC DNA]</scope>
    <source>
        <strain>ATCC 35602 / DSM 5306 / Rt17-B1</strain>
    </source>
</reference>
<proteinExistence type="inferred from homology"/>
<organism>
    <name type="scientific">Fervidobacterium nodosum (strain ATCC 35602 / DSM 5306 / Rt17-B1)</name>
    <dbReference type="NCBI Taxonomy" id="381764"/>
    <lineage>
        <taxon>Bacteria</taxon>
        <taxon>Thermotogati</taxon>
        <taxon>Thermotogota</taxon>
        <taxon>Thermotogae</taxon>
        <taxon>Thermotogales</taxon>
        <taxon>Fervidobacteriaceae</taxon>
        <taxon>Fervidobacterium</taxon>
    </lineage>
</organism>
<comment type="function">
    <text evidence="1">Binds directly to 23S rRNA. The L1 stalk is quite mobile in the ribosome, and is involved in E site tRNA release.</text>
</comment>
<comment type="function">
    <text evidence="1">Protein L1 is also a translational repressor protein, it controls the translation of the L11 operon by binding to its mRNA.</text>
</comment>
<comment type="subunit">
    <text evidence="1">Part of the 50S ribosomal subunit.</text>
</comment>
<comment type="similarity">
    <text evidence="1">Belongs to the universal ribosomal protein uL1 family.</text>
</comment>
<name>RL1_FERNB</name>
<accession>A7HLB6</accession>
<evidence type="ECO:0000255" key="1">
    <source>
        <dbReference type="HAMAP-Rule" id="MF_01318"/>
    </source>
</evidence>
<evidence type="ECO:0000305" key="2"/>
<keyword id="KW-1185">Reference proteome</keyword>
<keyword id="KW-0678">Repressor</keyword>
<keyword id="KW-0687">Ribonucleoprotein</keyword>
<keyword id="KW-0689">Ribosomal protein</keyword>
<keyword id="KW-0694">RNA-binding</keyword>
<keyword id="KW-0699">rRNA-binding</keyword>
<keyword id="KW-0810">Translation regulation</keyword>
<keyword id="KW-0820">tRNA-binding</keyword>
<protein>
    <recommendedName>
        <fullName evidence="1">Large ribosomal subunit protein uL1</fullName>
    </recommendedName>
    <alternativeName>
        <fullName evidence="2">50S ribosomal protein L1</fullName>
    </alternativeName>
</protein>
<sequence>MPKHSKRYNEIRKLVDSEKAYTLDEAVELLKKTATAKFDETVEFHIKTNIDYRKSEQNIRSTISLPHGTGKSVRVLVFAKGEKAEEAKQAGADYVGAEELADKIANEGFVDFDVAIATPDMMKVIGKLGKVLGPRGLMPNPKTGTVTEDIAAAVSEFKKGKVEVRTDKTGNLHFPVGKASFEPDKLKENIKSAYEQILSLRPAGVKGHFIKKAVVATTMGPGIKLDLNVLAEGKR</sequence>
<feature type="chain" id="PRO_1000073219" description="Large ribosomal subunit protein uL1">
    <location>
        <begin position="1"/>
        <end position="235"/>
    </location>
</feature>